<reference key="1">
    <citation type="journal article" date="1999" name="Genetics">
        <title>Divergence of the hyperthermophilic archaea Pyrococcus furiosus and P. horikoshii inferred from complete genomic sequences.</title>
        <authorList>
            <person name="Maeder D.L."/>
            <person name="Weiss R.B."/>
            <person name="Dunn D.M."/>
            <person name="Cherry J.L."/>
            <person name="Gonzalez J.M."/>
            <person name="DiRuggiero J."/>
            <person name="Robb F.T."/>
        </authorList>
    </citation>
    <scope>NUCLEOTIDE SEQUENCE [LARGE SCALE GENOMIC DNA]</scope>
    <source>
        <strain>ATCC 43587 / DSM 3638 / JCM 8422 / Vc1</strain>
    </source>
</reference>
<proteinExistence type="evidence at protein level"/>
<comment type="function">
    <text evidence="1">Could be responsible for synthesis of pseudouridine from uracil-55 in the psi GC loop of transfer RNAs.</text>
</comment>
<comment type="catalytic activity">
    <reaction evidence="1">
        <text>uridine(55) in tRNA = pseudouridine(55) in tRNA</text>
        <dbReference type="Rhea" id="RHEA:42532"/>
        <dbReference type="Rhea" id="RHEA-COMP:10101"/>
        <dbReference type="Rhea" id="RHEA-COMP:10102"/>
        <dbReference type="ChEBI" id="CHEBI:65314"/>
        <dbReference type="ChEBI" id="CHEBI:65315"/>
        <dbReference type="EC" id="5.4.99.25"/>
    </reaction>
</comment>
<comment type="interaction">
    <interactant intactId="EBI-9025178">
        <id>Q7LWY0</id>
    </interactant>
    <interactant intactId="EBI-9025188">
        <id>Q8U1R4</id>
        <label>nop10</label>
    </interactant>
    <organismsDiffer>false</organismsDiffer>
    <experiments>6</experiments>
</comment>
<comment type="similarity">
    <text evidence="1">Belongs to the pseudouridine synthase TruB family. Type 2 subfamily.</text>
</comment>
<keyword id="KW-0002">3D-structure</keyword>
<keyword id="KW-0413">Isomerase</keyword>
<keyword id="KW-1185">Reference proteome</keyword>
<keyword id="KW-0819">tRNA processing</keyword>
<gene>
    <name evidence="1" type="primary">truB</name>
    <name type="ordered locus">PF1785</name>
</gene>
<dbReference type="EC" id="5.4.99.25" evidence="1"/>
<dbReference type="EMBL" id="AE009950">
    <property type="protein sequence ID" value="AAL81909.1"/>
    <property type="molecule type" value="Genomic_DNA"/>
</dbReference>
<dbReference type="RefSeq" id="WP_011012926.1">
    <property type="nucleotide sequence ID" value="NZ_CP023154.1"/>
</dbReference>
<dbReference type="PDB" id="2EY4">
    <property type="method" value="X-ray"/>
    <property type="resolution" value="2.11 A"/>
    <property type="chains" value="A/B=1-333"/>
</dbReference>
<dbReference type="PDB" id="2HVY">
    <property type="method" value="X-ray"/>
    <property type="resolution" value="2.30 A"/>
    <property type="chains" value="A=1-340"/>
</dbReference>
<dbReference type="PDB" id="2RFK">
    <property type="method" value="X-ray"/>
    <property type="resolution" value="2.87 A"/>
    <property type="chains" value="A=5-338"/>
</dbReference>
<dbReference type="PDB" id="3HAX">
    <property type="method" value="X-ray"/>
    <property type="resolution" value="2.11 A"/>
    <property type="chains" value="A=1-340"/>
</dbReference>
<dbReference type="PDB" id="3HAY">
    <property type="method" value="X-ray"/>
    <property type="resolution" value="4.99 A"/>
    <property type="chains" value="A=1-340"/>
</dbReference>
<dbReference type="PDB" id="3HJW">
    <property type="method" value="X-ray"/>
    <property type="resolution" value="2.35 A"/>
    <property type="chains" value="A=8-334"/>
</dbReference>
<dbReference type="PDB" id="3HJY">
    <property type="method" value="X-ray"/>
    <property type="resolution" value="3.65 A"/>
    <property type="chains" value="A=8-334"/>
</dbReference>
<dbReference type="PDB" id="3LWO">
    <property type="method" value="X-ray"/>
    <property type="resolution" value="2.86 A"/>
    <property type="chains" value="A=1-340"/>
</dbReference>
<dbReference type="PDB" id="3LWP">
    <property type="method" value="X-ray"/>
    <property type="resolution" value="2.50 A"/>
    <property type="chains" value="A=1-340"/>
</dbReference>
<dbReference type="PDB" id="3LWQ">
    <property type="method" value="X-ray"/>
    <property type="resolution" value="2.68 A"/>
    <property type="chains" value="A=1-340"/>
</dbReference>
<dbReference type="PDB" id="3LWR">
    <property type="method" value="X-ray"/>
    <property type="resolution" value="2.20 A"/>
    <property type="chains" value="A=1-340"/>
</dbReference>
<dbReference type="PDB" id="3LWV">
    <property type="method" value="X-ray"/>
    <property type="resolution" value="2.50 A"/>
    <property type="chains" value="A=1-340"/>
</dbReference>
<dbReference type="PDB" id="3MQK">
    <property type="method" value="X-ray"/>
    <property type="resolution" value="2.80 A"/>
    <property type="chains" value="A=8-335"/>
</dbReference>
<dbReference type="PDBsum" id="2EY4"/>
<dbReference type="PDBsum" id="2HVY"/>
<dbReference type="PDBsum" id="2RFK"/>
<dbReference type="PDBsum" id="3HAX"/>
<dbReference type="PDBsum" id="3HAY"/>
<dbReference type="PDBsum" id="3HJW"/>
<dbReference type="PDBsum" id="3HJY"/>
<dbReference type="PDBsum" id="3LWO"/>
<dbReference type="PDBsum" id="3LWP"/>
<dbReference type="PDBsum" id="3LWQ"/>
<dbReference type="PDBsum" id="3LWR"/>
<dbReference type="PDBsum" id="3LWV"/>
<dbReference type="PDBsum" id="3MQK"/>
<dbReference type="SMR" id="Q7LWY0"/>
<dbReference type="DIP" id="DIP-48526N"/>
<dbReference type="IntAct" id="Q7LWY0">
    <property type="interactions" value="1"/>
</dbReference>
<dbReference type="STRING" id="186497.PF1785"/>
<dbReference type="PaxDb" id="186497-PF1785"/>
<dbReference type="KEGG" id="pfu:PF1785"/>
<dbReference type="PATRIC" id="fig|186497.12.peg.1856"/>
<dbReference type="eggNOG" id="arCOG00987">
    <property type="taxonomic scope" value="Archaea"/>
</dbReference>
<dbReference type="HOGENOM" id="CLU_032087_3_0_2"/>
<dbReference type="OrthoDB" id="35866at2157"/>
<dbReference type="PhylomeDB" id="Q7LWY0"/>
<dbReference type="EvolutionaryTrace" id="Q7LWY0"/>
<dbReference type="Proteomes" id="UP000001013">
    <property type="component" value="Chromosome"/>
</dbReference>
<dbReference type="GO" id="GO:0003723">
    <property type="term" value="F:RNA binding"/>
    <property type="evidence" value="ECO:0007669"/>
    <property type="project" value="InterPro"/>
</dbReference>
<dbReference type="GO" id="GO:0160148">
    <property type="term" value="F:tRNA pseudouridine(55) synthase activity"/>
    <property type="evidence" value="ECO:0007669"/>
    <property type="project" value="UniProtKB-EC"/>
</dbReference>
<dbReference type="GO" id="GO:0000495">
    <property type="term" value="P:box H/ACA sno(s)RNA 3'-end processing"/>
    <property type="evidence" value="ECO:0007669"/>
    <property type="project" value="TreeGrafter"/>
</dbReference>
<dbReference type="GO" id="GO:1990481">
    <property type="term" value="P:mRNA pseudouridine synthesis"/>
    <property type="evidence" value="ECO:0007669"/>
    <property type="project" value="TreeGrafter"/>
</dbReference>
<dbReference type="GO" id="GO:0031118">
    <property type="term" value="P:rRNA pseudouridine synthesis"/>
    <property type="evidence" value="ECO:0007669"/>
    <property type="project" value="TreeGrafter"/>
</dbReference>
<dbReference type="GO" id="GO:0031120">
    <property type="term" value="P:snRNA pseudouridine synthesis"/>
    <property type="evidence" value="ECO:0007669"/>
    <property type="project" value="TreeGrafter"/>
</dbReference>
<dbReference type="GO" id="GO:0031119">
    <property type="term" value="P:tRNA pseudouridine synthesis"/>
    <property type="evidence" value="ECO:0007669"/>
    <property type="project" value="UniProtKB-UniRule"/>
</dbReference>
<dbReference type="CDD" id="cd02572">
    <property type="entry name" value="PseudoU_synth_hDyskerin"/>
    <property type="match status" value="1"/>
</dbReference>
<dbReference type="CDD" id="cd21148">
    <property type="entry name" value="PUA_Cbf5"/>
    <property type="match status" value="1"/>
</dbReference>
<dbReference type="FunFam" id="3.30.2350.10:FF:000001">
    <property type="entry name" value="H/ACA ribonucleoprotein complex subunit CBF5"/>
    <property type="match status" value="1"/>
</dbReference>
<dbReference type="FunFam" id="2.30.130.10:FF:000010">
    <property type="entry name" value="Probable tRNA pseudouridine synthase B"/>
    <property type="match status" value="1"/>
</dbReference>
<dbReference type="Gene3D" id="3.30.2350.10">
    <property type="entry name" value="Pseudouridine synthase"/>
    <property type="match status" value="1"/>
</dbReference>
<dbReference type="Gene3D" id="2.30.130.10">
    <property type="entry name" value="PUA domain"/>
    <property type="match status" value="1"/>
</dbReference>
<dbReference type="HAMAP" id="MF_01081">
    <property type="entry name" value="TruB_arch"/>
    <property type="match status" value="1"/>
</dbReference>
<dbReference type="InterPro" id="IPR012960">
    <property type="entry name" value="Dyskerin-like"/>
</dbReference>
<dbReference type="InterPro" id="IPR020103">
    <property type="entry name" value="PsdUridine_synth_cat_dom_sf"/>
</dbReference>
<dbReference type="InterPro" id="IPR002501">
    <property type="entry name" value="PsdUridine_synth_N"/>
</dbReference>
<dbReference type="InterPro" id="IPR002478">
    <property type="entry name" value="PUA"/>
</dbReference>
<dbReference type="InterPro" id="IPR015947">
    <property type="entry name" value="PUA-like_sf"/>
</dbReference>
<dbReference type="InterPro" id="IPR036974">
    <property type="entry name" value="PUA_sf"/>
</dbReference>
<dbReference type="InterPro" id="IPR004802">
    <property type="entry name" value="tRNA_PsdUridine_synth_B_fam"/>
</dbReference>
<dbReference type="InterPro" id="IPR026326">
    <property type="entry name" value="TruB_arch"/>
</dbReference>
<dbReference type="InterPro" id="IPR032819">
    <property type="entry name" value="TruB_C"/>
</dbReference>
<dbReference type="InterPro" id="IPR004521">
    <property type="entry name" value="Uncharacterised_CHP00451"/>
</dbReference>
<dbReference type="NCBIfam" id="TIGR00425">
    <property type="entry name" value="CBF5"/>
    <property type="match status" value="1"/>
</dbReference>
<dbReference type="NCBIfam" id="NF003280">
    <property type="entry name" value="PRK04270.1"/>
    <property type="match status" value="1"/>
</dbReference>
<dbReference type="NCBIfam" id="TIGR00451">
    <property type="entry name" value="unchar_dom_2"/>
    <property type="match status" value="1"/>
</dbReference>
<dbReference type="PANTHER" id="PTHR23127">
    <property type="entry name" value="CENTROMERE/MICROTUBULE BINDING PROTEIN CBF5"/>
    <property type="match status" value="1"/>
</dbReference>
<dbReference type="PANTHER" id="PTHR23127:SF0">
    <property type="entry name" value="H_ACA RIBONUCLEOPROTEIN COMPLEX SUBUNIT DKC1"/>
    <property type="match status" value="1"/>
</dbReference>
<dbReference type="Pfam" id="PF08068">
    <property type="entry name" value="DKCLD"/>
    <property type="match status" value="1"/>
</dbReference>
<dbReference type="Pfam" id="PF01472">
    <property type="entry name" value="PUA"/>
    <property type="match status" value="1"/>
</dbReference>
<dbReference type="Pfam" id="PF16198">
    <property type="entry name" value="TruB_C_2"/>
    <property type="match status" value="1"/>
</dbReference>
<dbReference type="Pfam" id="PF01509">
    <property type="entry name" value="TruB_N"/>
    <property type="match status" value="1"/>
</dbReference>
<dbReference type="SMART" id="SM01136">
    <property type="entry name" value="DKCLD"/>
    <property type="match status" value="1"/>
</dbReference>
<dbReference type="SMART" id="SM00359">
    <property type="entry name" value="PUA"/>
    <property type="match status" value="1"/>
</dbReference>
<dbReference type="SUPFAM" id="SSF55120">
    <property type="entry name" value="Pseudouridine synthase"/>
    <property type="match status" value="1"/>
</dbReference>
<dbReference type="SUPFAM" id="SSF88697">
    <property type="entry name" value="PUA domain-like"/>
    <property type="match status" value="1"/>
</dbReference>
<dbReference type="PROSITE" id="PS50890">
    <property type="entry name" value="PUA"/>
    <property type="match status" value="1"/>
</dbReference>
<evidence type="ECO:0000255" key="1">
    <source>
        <dbReference type="HAMAP-Rule" id="MF_01081"/>
    </source>
</evidence>
<evidence type="ECO:0007829" key="2">
    <source>
        <dbReference type="PDB" id="2EY4"/>
    </source>
</evidence>
<evidence type="ECO:0007829" key="3">
    <source>
        <dbReference type="PDB" id="2RFK"/>
    </source>
</evidence>
<evidence type="ECO:0007829" key="4">
    <source>
        <dbReference type="PDB" id="3HAX"/>
    </source>
</evidence>
<evidence type="ECO:0007829" key="5">
    <source>
        <dbReference type="PDB" id="3HJW"/>
    </source>
</evidence>
<organism>
    <name type="scientific">Pyrococcus furiosus (strain ATCC 43587 / DSM 3638 / JCM 8422 / Vc1)</name>
    <dbReference type="NCBI Taxonomy" id="186497"/>
    <lineage>
        <taxon>Archaea</taxon>
        <taxon>Methanobacteriati</taxon>
        <taxon>Methanobacteriota</taxon>
        <taxon>Thermococci</taxon>
        <taxon>Thermococcales</taxon>
        <taxon>Thermococcaceae</taxon>
        <taxon>Pyrococcus</taxon>
    </lineage>
</organism>
<protein>
    <recommendedName>
        <fullName evidence="1">Probable tRNA pseudouridine synthase B</fullName>
        <ecNumber evidence="1">5.4.99.25</ecNumber>
    </recommendedName>
    <alternativeName>
        <fullName evidence="1">tRNA pseudouridine(55) synthase</fullName>
        <shortName evidence="1">Psi55 synthase</shortName>
    </alternativeName>
    <alternativeName>
        <fullName evidence="1">tRNA pseudouridylate synthase</fullName>
    </alternativeName>
    <alternativeName>
        <fullName evidence="1">tRNA-uridine isomerase</fullName>
    </alternativeName>
</protein>
<accession>Q7LWY0</accession>
<name>TRUB_PYRFU</name>
<sequence>MARDEVRRILPADIKREVLIKDENAETNPDWGFPPEKRPIEMHIQFGVINLDKPPGPTSHEVVAWIKKILNLEKAGHGGTLDPKVSGVLPVALEKATRVVQALLPAGKEYVALMHLHGDVPEDKIIQVMKEFEGEIIQRPPLRSAVKRRLRTRKVYYIEVLEIEGRDVLFRVGVEAGTYIRSLIHHIGLALGVGAHMSELRRTRSGPFKEDETLITLHDLVDYYYFWKEDGIEEYFRKAIQPMEKAVEHLPKVWIKDSAVAAVTHGADLAVPGIAKLHAGIKRGDLVAIMTLKDELVALGKAMMTSQEMLEKTKGIAVDVEKVFMPRDWYPKLWEKRDRS</sequence>
<feature type="chain" id="PRO_0000121968" description="Probable tRNA pseudouridine synthase B">
    <location>
        <begin position="1"/>
        <end position="340"/>
    </location>
</feature>
<feature type="domain" description="PUA" evidence="1">
    <location>
        <begin position="250"/>
        <end position="325"/>
    </location>
</feature>
<feature type="active site" description="Nucleophile" evidence="1">
    <location>
        <position position="82"/>
    </location>
</feature>
<feature type="helix" evidence="2">
    <location>
        <begin position="11"/>
        <end position="13"/>
    </location>
</feature>
<feature type="strand" evidence="2">
    <location>
        <begin position="18"/>
        <end position="21"/>
    </location>
</feature>
<feature type="helix" evidence="2">
    <location>
        <begin position="35"/>
        <end position="37"/>
    </location>
</feature>
<feature type="helix" evidence="2">
    <location>
        <begin position="40"/>
        <end position="45"/>
    </location>
</feature>
<feature type="strand" evidence="2">
    <location>
        <begin position="47"/>
        <end position="53"/>
    </location>
</feature>
<feature type="strand" evidence="2">
    <location>
        <begin position="55"/>
        <end position="57"/>
    </location>
</feature>
<feature type="helix" evidence="2">
    <location>
        <begin position="59"/>
        <end position="69"/>
    </location>
</feature>
<feature type="strand" evidence="2">
    <location>
        <begin position="75"/>
        <end position="79"/>
    </location>
</feature>
<feature type="strand" evidence="2">
    <location>
        <begin position="86"/>
        <end position="93"/>
    </location>
</feature>
<feature type="helix" evidence="2">
    <location>
        <begin position="94"/>
        <end position="99"/>
    </location>
</feature>
<feature type="helix" evidence="2">
    <location>
        <begin position="100"/>
        <end position="103"/>
    </location>
</feature>
<feature type="strand" evidence="3">
    <location>
        <begin position="104"/>
        <end position="106"/>
    </location>
</feature>
<feature type="strand" evidence="2">
    <location>
        <begin position="108"/>
        <end position="118"/>
    </location>
</feature>
<feature type="helix" evidence="2">
    <location>
        <begin position="122"/>
        <end position="130"/>
    </location>
</feature>
<feature type="strand" evidence="2">
    <location>
        <begin position="133"/>
        <end position="138"/>
    </location>
</feature>
<feature type="strand" evidence="2">
    <location>
        <begin position="142"/>
        <end position="144"/>
    </location>
</feature>
<feature type="strand" evidence="2">
    <location>
        <begin position="151"/>
        <end position="164"/>
    </location>
</feature>
<feature type="strand" evidence="2">
    <location>
        <begin position="167"/>
        <end position="174"/>
    </location>
</feature>
<feature type="helix" evidence="2">
    <location>
        <begin position="180"/>
        <end position="190"/>
    </location>
</feature>
<feature type="strand" evidence="4">
    <location>
        <begin position="191"/>
        <end position="193"/>
    </location>
</feature>
<feature type="strand" evidence="2">
    <location>
        <begin position="195"/>
        <end position="205"/>
    </location>
</feature>
<feature type="strand" evidence="2">
    <location>
        <begin position="208"/>
        <end position="211"/>
    </location>
</feature>
<feature type="strand" evidence="5">
    <location>
        <begin position="214"/>
        <end position="216"/>
    </location>
</feature>
<feature type="helix" evidence="2">
    <location>
        <begin position="217"/>
        <end position="230"/>
    </location>
</feature>
<feature type="helix" evidence="2">
    <location>
        <begin position="234"/>
        <end position="238"/>
    </location>
</feature>
<feature type="strand" evidence="2">
    <location>
        <begin position="240"/>
        <end position="242"/>
    </location>
</feature>
<feature type="helix" evidence="2">
    <location>
        <begin position="243"/>
        <end position="247"/>
    </location>
</feature>
<feature type="strand" evidence="2">
    <location>
        <begin position="252"/>
        <end position="255"/>
    </location>
</feature>
<feature type="helix" evidence="2">
    <location>
        <begin position="257"/>
        <end position="263"/>
    </location>
</feature>
<feature type="turn" evidence="2">
    <location>
        <begin position="264"/>
        <end position="266"/>
    </location>
</feature>
<feature type="helix" evidence="2">
    <location>
        <begin position="271"/>
        <end position="273"/>
    </location>
</feature>
<feature type="strand" evidence="2">
    <location>
        <begin position="274"/>
        <end position="278"/>
    </location>
</feature>
<feature type="strand" evidence="2">
    <location>
        <begin position="286"/>
        <end position="291"/>
    </location>
</feature>
<feature type="strand" evidence="2">
    <location>
        <begin position="296"/>
        <end position="304"/>
    </location>
</feature>
<feature type="helix" evidence="2">
    <location>
        <begin position="306"/>
        <end position="311"/>
    </location>
</feature>
<feature type="strand" evidence="2">
    <location>
        <begin position="314"/>
        <end position="323"/>
    </location>
</feature>